<name>RS15_CAMHC</name>
<keyword id="KW-1185">Reference proteome</keyword>
<keyword id="KW-0687">Ribonucleoprotein</keyword>
<keyword id="KW-0689">Ribosomal protein</keyword>
<keyword id="KW-0694">RNA-binding</keyword>
<keyword id="KW-0699">rRNA-binding</keyword>
<organism>
    <name type="scientific">Campylobacter hominis (strain ATCC BAA-381 / DSM 21671 / CCUG 45161 / LMG 19568 / NCTC 13146 / CH001A)</name>
    <dbReference type="NCBI Taxonomy" id="360107"/>
    <lineage>
        <taxon>Bacteria</taxon>
        <taxon>Pseudomonadati</taxon>
        <taxon>Campylobacterota</taxon>
        <taxon>Epsilonproteobacteria</taxon>
        <taxon>Campylobacterales</taxon>
        <taxon>Campylobacteraceae</taxon>
        <taxon>Campylobacter</taxon>
    </lineage>
</organism>
<accession>A7I1V7</accession>
<comment type="function">
    <text evidence="1">One of the primary rRNA binding proteins, it binds directly to 16S rRNA where it helps nucleate assembly of the platform of the 30S subunit by binding and bridging several RNA helices of the 16S rRNA.</text>
</comment>
<comment type="function">
    <text evidence="1">Forms an intersubunit bridge (bridge B4) with the 23S rRNA of the 50S subunit in the ribosome.</text>
</comment>
<comment type="subunit">
    <text evidence="1">Part of the 30S ribosomal subunit. Forms a bridge to the 50S subunit in the 70S ribosome, contacting the 23S rRNA.</text>
</comment>
<comment type="similarity">
    <text evidence="1">Belongs to the universal ribosomal protein uS15 family.</text>
</comment>
<reference key="1">
    <citation type="submission" date="2007-07" db="EMBL/GenBank/DDBJ databases">
        <title>Complete genome sequence of Campylobacter hominis ATCC BAA-381, a commensal isolated from the human gastrointestinal tract.</title>
        <authorList>
            <person name="Fouts D.E."/>
            <person name="Mongodin E.F."/>
            <person name="Puiu D."/>
            <person name="Sebastian Y."/>
            <person name="Miller W.G."/>
            <person name="Mandrell R.E."/>
            <person name="Nelson K.E."/>
        </authorList>
    </citation>
    <scope>NUCLEOTIDE SEQUENCE [LARGE SCALE GENOMIC DNA]</scope>
    <source>
        <strain>ATCC BAA-381 / DSM 21671 / CCUG 45161 / LMG 19568 / NCTC 13146 / CH001A</strain>
    </source>
</reference>
<proteinExistence type="inferred from homology"/>
<dbReference type="EMBL" id="CP000776">
    <property type="protein sequence ID" value="ABS52228.1"/>
    <property type="molecule type" value="Genomic_DNA"/>
</dbReference>
<dbReference type="RefSeq" id="WP_012108790.1">
    <property type="nucleotide sequence ID" value="NC_009714.1"/>
</dbReference>
<dbReference type="SMR" id="A7I1V7"/>
<dbReference type="STRING" id="360107.CHAB381_0937"/>
<dbReference type="KEGG" id="cha:CHAB381_0937"/>
<dbReference type="eggNOG" id="COG0184">
    <property type="taxonomic scope" value="Bacteria"/>
</dbReference>
<dbReference type="HOGENOM" id="CLU_148518_0_0_7"/>
<dbReference type="OrthoDB" id="9799262at2"/>
<dbReference type="Proteomes" id="UP000002407">
    <property type="component" value="Chromosome"/>
</dbReference>
<dbReference type="GO" id="GO:0022627">
    <property type="term" value="C:cytosolic small ribosomal subunit"/>
    <property type="evidence" value="ECO:0007669"/>
    <property type="project" value="TreeGrafter"/>
</dbReference>
<dbReference type="GO" id="GO:0019843">
    <property type="term" value="F:rRNA binding"/>
    <property type="evidence" value="ECO:0007669"/>
    <property type="project" value="UniProtKB-UniRule"/>
</dbReference>
<dbReference type="GO" id="GO:0003735">
    <property type="term" value="F:structural constituent of ribosome"/>
    <property type="evidence" value="ECO:0007669"/>
    <property type="project" value="InterPro"/>
</dbReference>
<dbReference type="GO" id="GO:0006412">
    <property type="term" value="P:translation"/>
    <property type="evidence" value="ECO:0007669"/>
    <property type="project" value="UniProtKB-UniRule"/>
</dbReference>
<dbReference type="CDD" id="cd00353">
    <property type="entry name" value="Ribosomal_S15p_S13e"/>
    <property type="match status" value="1"/>
</dbReference>
<dbReference type="FunFam" id="1.10.287.10:FF:000002">
    <property type="entry name" value="30S ribosomal protein S15"/>
    <property type="match status" value="1"/>
</dbReference>
<dbReference type="Gene3D" id="6.10.250.3130">
    <property type="match status" value="1"/>
</dbReference>
<dbReference type="Gene3D" id="1.10.287.10">
    <property type="entry name" value="S15/NS1, RNA-binding"/>
    <property type="match status" value="1"/>
</dbReference>
<dbReference type="HAMAP" id="MF_01343_B">
    <property type="entry name" value="Ribosomal_uS15_B"/>
    <property type="match status" value="1"/>
</dbReference>
<dbReference type="InterPro" id="IPR000589">
    <property type="entry name" value="Ribosomal_uS15"/>
</dbReference>
<dbReference type="InterPro" id="IPR005290">
    <property type="entry name" value="Ribosomal_uS15_bac-type"/>
</dbReference>
<dbReference type="InterPro" id="IPR009068">
    <property type="entry name" value="uS15_NS1_RNA-bd_sf"/>
</dbReference>
<dbReference type="NCBIfam" id="TIGR00952">
    <property type="entry name" value="S15_bact"/>
    <property type="match status" value="1"/>
</dbReference>
<dbReference type="PANTHER" id="PTHR23321">
    <property type="entry name" value="RIBOSOMAL PROTEIN S15, BACTERIAL AND ORGANELLAR"/>
    <property type="match status" value="1"/>
</dbReference>
<dbReference type="PANTHER" id="PTHR23321:SF26">
    <property type="entry name" value="SMALL RIBOSOMAL SUBUNIT PROTEIN US15M"/>
    <property type="match status" value="1"/>
</dbReference>
<dbReference type="Pfam" id="PF00312">
    <property type="entry name" value="Ribosomal_S15"/>
    <property type="match status" value="1"/>
</dbReference>
<dbReference type="SMART" id="SM01387">
    <property type="entry name" value="Ribosomal_S15"/>
    <property type="match status" value="1"/>
</dbReference>
<dbReference type="SUPFAM" id="SSF47060">
    <property type="entry name" value="S15/NS1 RNA-binding domain"/>
    <property type="match status" value="1"/>
</dbReference>
<dbReference type="PROSITE" id="PS00362">
    <property type="entry name" value="RIBOSOMAL_S15"/>
    <property type="match status" value="1"/>
</dbReference>
<feature type="chain" id="PRO_1000054770" description="Small ribosomal subunit protein uS15">
    <location>
        <begin position="1"/>
        <end position="90"/>
    </location>
</feature>
<evidence type="ECO:0000255" key="1">
    <source>
        <dbReference type="HAMAP-Rule" id="MF_01343"/>
    </source>
</evidence>
<evidence type="ECO:0000305" key="2"/>
<sequence>MALDTAQKAQIVAKFARKEKDTGSSEVQIALLSARIDSITEHMQNNPKDFSSRLGLLKLVGQRKRLMKYLKSTNYGAYSKLVNELNLKDK</sequence>
<gene>
    <name evidence="1" type="primary">rpsO</name>
    <name type="ordered locus">CHAB381_0937</name>
</gene>
<protein>
    <recommendedName>
        <fullName evidence="1">Small ribosomal subunit protein uS15</fullName>
    </recommendedName>
    <alternativeName>
        <fullName evidence="2">30S ribosomal protein S15</fullName>
    </alternativeName>
</protein>